<sequence>MAWIPLLLPLLTLCTGSEASYELTQPPSVSVSLGQMARITCSGEALPKKYAYWYQQKPGQFPVLVIYKDSERPSGIPERFSGSSSGTIVTLTISGVQAEDEADYYCLSADSSGTY</sequence>
<protein>
    <recommendedName>
        <fullName evidence="4 9">Immunoglobulin lambda variable 3-16</fullName>
    </recommendedName>
</protein>
<name>LV316_HUMAN</name>
<comment type="function">
    <text evidence="5 6 7 8">V region of the variable domain of immunoglobulin light chains that participates in the antigen recognition (PubMed:24600447). Immunoglobulins, also known as antibodies, are membrane-bound or secreted glycoproteins produced by B lymphocytes. In the recognition phase of humoral immunity, the membrane-bound immunoglobulins serve as receptors which, upon binding of a specific antigen, trigger the clonal expansion and differentiation of B lymphocytes into immunoglobulins-secreting plasma cells. Secreted immunoglobulins mediate the effector phase of humoral immunity, which results in the elimination of bound antigens (PubMed:20176268, PubMed:22158414). The antigen binding site is formed by the variable domain of one heavy chain, together with that of its associated light chain. Thus, each immunoglobulin has two antigen binding sites with remarkable affinity for a particular antigen. The variable domains are assembled by a process called V-(D)-J rearrangement and can then be subjected to somatic hypermutations which, after exposure to antigen and selection, allow affinity maturation for a particular antigen (PubMed:17576170, PubMed:20176268).</text>
</comment>
<comment type="subunit">
    <text evidence="6">Immunoglobulins are composed of two identical heavy chains and two identical light chains; disulfide-linked.</text>
</comment>
<comment type="subcellular location">
    <subcellularLocation>
        <location evidence="6 7">Secreted</location>
    </subcellularLocation>
    <subcellularLocation>
        <location evidence="6 7">Cell membrane</location>
    </subcellularLocation>
</comment>
<comment type="polymorphism">
    <text>There are several alleles. The sequence shown is that of IMGT allele IGLV3-16*01.</text>
</comment>
<comment type="caution">
    <text evidence="10">For an example of a full-length immunoglobulin lambda light chain see AC P0DOX8.</text>
</comment>
<comment type="sequence caution" evidence="10">
    <conflict type="erroneous gene model prediction">
        <sequence resource="EMBL-CDS" id="EAW59534"/>
    </conflict>
</comment>
<proteinExistence type="evidence at protein level"/>
<accession>A0A075B6K0</accession>
<dbReference type="EMBL" id="AC244250">
    <property type="status" value="NOT_ANNOTATED_CDS"/>
    <property type="molecule type" value="Genomic_DNA"/>
</dbReference>
<dbReference type="EMBL" id="CH471095">
    <property type="protein sequence ID" value="EAW59534.1"/>
    <property type="status" value="ALT_SEQ"/>
    <property type="molecule type" value="Genomic_DNA"/>
</dbReference>
<dbReference type="SMR" id="A0A075B6K0"/>
<dbReference type="FunCoup" id="A0A075B6K0">
    <property type="interactions" value="371"/>
</dbReference>
<dbReference type="IMGT_GENE-DB" id="IGLV3-16"/>
<dbReference type="BioMuta" id="IGLV3-16"/>
<dbReference type="jPOST" id="A0A075B6K0"/>
<dbReference type="MassIVE" id="A0A075B6K0"/>
<dbReference type="Ensembl" id="ENST00000390311.3">
    <property type="protein sequence ID" value="ENSP00000374846.3"/>
    <property type="gene ID" value="ENSG00000211665.3"/>
</dbReference>
<dbReference type="UCSC" id="uc062cdb.1">
    <property type="organism name" value="human"/>
</dbReference>
<dbReference type="AGR" id="HGNC:5901"/>
<dbReference type="GeneCards" id="IGLV3-16"/>
<dbReference type="HGNC" id="HGNC:5901">
    <property type="gene designation" value="IGLV3-16"/>
</dbReference>
<dbReference type="HPA" id="ENSG00000211665">
    <property type="expression patterns" value="Group enriched (lymphoid tissue, urinary bladder)"/>
</dbReference>
<dbReference type="neXtProt" id="NX_A0A075B6K0"/>
<dbReference type="VEuPathDB" id="HostDB:ENSG00000211665"/>
<dbReference type="GeneTree" id="ENSGT00940000153120"/>
<dbReference type="HOGENOM" id="CLU_077975_4_0_1"/>
<dbReference type="InParanoid" id="A0A075B6K0"/>
<dbReference type="OMA" id="ENDGHCG"/>
<dbReference type="OrthoDB" id="9531984at2759"/>
<dbReference type="PAN-GO" id="A0A075B6K0">
    <property type="GO annotations" value="3 GO annotations based on evolutionary models"/>
</dbReference>
<dbReference type="PhylomeDB" id="A0A075B6K0"/>
<dbReference type="SignaLink" id="A0A075B6K0"/>
<dbReference type="Pharos" id="A0A075B6K0">
    <property type="development level" value="Tdark"/>
</dbReference>
<dbReference type="PRO" id="PR:A0A075B6K0"/>
<dbReference type="Proteomes" id="UP000005640">
    <property type="component" value="Chromosome 22"/>
</dbReference>
<dbReference type="RNAct" id="A0A075B6K0">
    <property type="molecule type" value="protein"/>
</dbReference>
<dbReference type="Bgee" id="ENSG00000211665">
    <property type="expression patterns" value="Expressed in lymph node and 72 other cell types or tissues"/>
</dbReference>
<dbReference type="GO" id="GO:0005576">
    <property type="term" value="C:extracellular region"/>
    <property type="evidence" value="ECO:0007669"/>
    <property type="project" value="UniProtKB-SubCell"/>
</dbReference>
<dbReference type="GO" id="GO:0019814">
    <property type="term" value="C:immunoglobulin complex"/>
    <property type="evidence" value="ECO:0000318"/>
    <property type="project" value="GO_Central"/>
</dbReference>
<dbReference type="GO" id="GO:0005886">
    <property type="term" value="C:plasma membrane"/>
    <property type="evidence" value="ECO:0007669"/>
    <property type="project" value="UniProtKB-SubCell"/>
</dbReference>
<dbReference type="GO" id="GO:0002250">
    <property type="term" value="P:adaptive immune response"/>
    <property type="evidence" value="ECO:0007669"/>
    <property type="project" value="UniProtKB-KW"/>
</dbReference>
<dbReference type="GO" id="GO:0006955">
    <property type="term" value="P:immune response"/>
    <property type="evidence" value="ECO:0000318"/>
    <property type="project" value="GO_Central"/>
</dbReference>
<dbReference type="FunFam" id="2.60.40.10:FF:000620">
    <property type="entry name" value="Immunoglobulin lambda locus"/>
    <property type="match status" value="1"/>
</dbReference>
<dbReference type="Gene3D" id="2.60.40.10">
    <property type="entry name" value="Immunoglobulins"/>
    <property type="match status" value="1"/>
</dbReference>
<dbReference type="InterPro" id="IPR007110">
    <property type="entry name" value="Ig-like_dom"/>
</dbReference>
<dbReference type="InterPro" id="IPR036179">
    <property type="entry name" value="Ig-like_dom_sf"/>
</dbReference>
<dbReference type="InterPro" id="IPR013783">
    <property type="entry name" value="Ig-like_fold"/>
</dbReference>
<dbReference type="InterPro" id="IPR003599">
    <property type="entry name" value="Ig_sub"/>
</dbReference>
<dbReference type="InterPro" id="IPR013106">
    <property type="entry name" value="Ig_V-set"/>
</dbReference>
<dbReference type="InterPro" id="IPR050150">
    <property type="entry name" value="IgV_Light_Chain"/>
</dbReference>
<dbReference type="PANTHER" id="PTHR23267">
    <property type="entry name" value="IMMUNOGLOBULIN LIGHT CHAIN"/>
    <property type="match status" value="1"/>
</dbReference>
<dbReference type="Pfam" id="PF07686">
    <property type="entry name" value="V-set"/>
    <property type="match status" value="1"/>
</dbReference>
<dbReference type="SMART" id="SM00409">
    <property type="entry name" value="IG"/>
    <property type="match status" value="1"/>
</dbReference>
<dbReference type="SMART" id="SM00406">
    <property type="entry name" value="IGv"/>
    <property type="match status" value="1"/>
</dbReference>
<dbReference type="SUPFAM" id="SSF48726">
    <property type="entry name" value="Immunoglobulin"/>
    <property type="match status" value="1"/>
</dbReference>
<dbReference type="PROSITE" id="PS50835">
    <property type="entry name" value="IG_LIKE"/>
    <property type="match status" value="1"/>
</dbReference>
<feature type="signal peptide" evidence="2">
    <location>
        <begin position="1"/>
        <end position="19"/>
    </location>
</feature>
<feature type="chain" id="PRO_5007375767" description="Immunoglobulin lambda variable 3-16" evidence="2">
    <location>
        <begin position="20"/>
        <end position="115"/>
    </location>
</feature>
<feature type="domain" description="Ig-like" evidence="3">
    <location>
        <begin position="20"/>
        <end position="115" status="greater than"/>
    </location>
</feature>
<feature type="region of interest" description="Framework-1" evidence="1">
    <location>
        <begin position="20"/>
        <end position="41"/>
    </location>
</feature>
<feature type="region of interest" description="Complementarity-determining-1" evidence="1">
    <location>
        <begin position="42"/>
        <end position="50"/>
    </location>
</feature>
<feature type="region of interest" description="Framework-2" evidence="1">
    <location>
        <begin position="51"/>
        <end position="67"/>
    </location>
</feature>
<feature type="region of interest" description="Complementarity-determining-2" evidence="1">
    <location>
        <begin position="68"/>
        <end position="70"/>
    </location>
</feature>
<feature type="region of interest" description="Framework-3" evidence="1">
    <location>
        <begin position="71"/>
        <end position="106"/>
    </location>
</feature>
<feature type="region of interest" description="Complementarity-determining-3" evidence="1">
    <location>
        <begin position="107"/>
        <end position="115" status="greater than"/>
    </location>
</feature>
<feature type="disulfide bond" evidence="3">
    <location>
        <begin position="41"/>
        <end position="106"/>
    </location>
</feature>
<feature type="non-terminal residue">
    <location>
        <position position="115"/>
    </location>
</feature>
<gene>
    <name evidence="4 9" type="primary">IGLV3-16</name>
</gene>
<reference key="1">
    <citation type="journal article" date="1999" name="Nature">
        <title>The DNA sequence of human chromosome 22.</title>
        <authorList>
            <person name="Dunham I."/>
            <person name="Hunt A.R."/>
            <person name="Collins J.E."/>
            <person name="Bruskiewich R."/>
            <person name="Beare D.M."/>
            <person name="Clamp M."/>
            <person name="Smink L.J."/>
            <person name="Ainscough R."/>
            <person name="Almeida J.P."/>
            <person name="Babbage A.K."/>
            <person name="Bagguley C."/>
            <person name="Bailey J."/>
            <person name="Barlow K.F."/>
            <person name="Bates K.N."/>
            <person name="Beasley O.P."/>
            <person name="Bird C.P."/>
            <person name="Blakey S.E."/>
            <person name="Bridgeman A.M."/>
            <person name="Buck D."/>
            <person name="Burgess J."/>
            <person name="Burrill W.D."/>
            <person name="Burton J."/>
            <person name="Carder C."/>
            <person name="Carter N.P."/>
            <person name="Chen Y."/>
            <person name="Clark G."/>
            <person name="Clegg S.M."/>
            <person name="Cobley V.E."/>
            <person name="Cole C.G."/>
            <person name="Collier R.E."/>
            <person name="Connor R."/>
            <person name="Conroy D."/>
            <person name="Corby N.R."/>
            <person name="Coville G.J."/>
            <person name="Cox A.V."/>
            <person name="Davis J."/>
            <person name="Dawson E."/>
            <person name="Dhami P.D."/>
            <person name="Dockree C."/>
            <person name="Dodsworth S.J."/>
            <person name="Durbin R.M."/>
            <person name="Ellington A.G."/>
            <person name="Evans K.L."/>
            <person name="Fey J.M."/>
            <person name="Fleming K."/>
            <person name="French L."/>
            <person name="Garner A.A."/>
            <person name="Gilbert J.G.R."/>
            <person name="Goward M.E."/>
            <person name="Grafham D.V."/>
            <person name="Griffiths M.N.D."/>
            <person name="Hall C."/>
            <person name="Hall R.E."/>
            <person name="Hall-Tamlyn G."/>
            <person name="Heathcott R.W."/>
            <person name="Ho S."/>
            <person name="Holmes S."/>
            <person name="Hunt S.E."/>
            <person name="Jones M.C."/>
            <person name="Kershaw J."/>
            <person name="Kimberley A.M."/>
            <person name="King A."/>
            <person name="Laird G.K."/>
            <person name="Langford C.F."/>
            <person name="Leversha M.A."/>
            <person name="Lloyd C."/>
            <person name="Lloyd D.M."/>
            <person name="Martyn I.D."/>
            <person name="Mashreghi-Mohammadi M."/>
            <person name="Matthews L.H."/>
            <person name="Mccann O.T."/>
            <person name="Mcclay J."/>
            <person name="Mclaren S."/>
            <person name="McMurray A.A."/>
            <person name="Milne S.A."/>
            <person name="Mortimore B.J."/>
            <person name="Odell C.N."/>
            <person name="Pavitt R."/>
            <person name="Pearce A.V."/>
            <person name="Pearson D."/>
            <person name="Phillimore B.J.C.T."/>
            <person name="Phillips S.H."/>
            <person name="Plumb R.W."/>
            <person name="Ramsay H."/>
            <person name="Ramsey Y."/>
            <person name="Rogers L."/>
            <person name="Ross M.T."/>
            <person name="Scott C.E."/>
            <person name="Sehra H.K."/>
            <person name="Skuce C.D."/>
            <person name="Smalley S."/>
            <person name="Smith M.L."/>
            <person name="Soderlund C."/>
            <person name="Spragon L."/>
            <person name="Steward C.A."/>
            <person name="Sulston J.E."/>
            <person name="Swann R.M."/>
            <person name="Vaudin M."/>
            <person name="Wall M."/>
            <person name="Wallis J.M."/>
            <person name="Whiteley M.N."/>
            <person name="Willey D.L."/>
            <person name="Williams L."/>
            <person name="Williams S.A."/>
            <person name="Williamson H."/>
            <person name="Wilmer T.E."/>
            <person name="Wilming L."/>
            <person name="Wright C.L."/>
            <person name="Hubbard T."/>
            <person name="Bentley D.R."/>
            <person name="Beck S."/>
            <person name="Rogers J."/>
            <person name="Shimizu N."/>
            <person name="Minoshima S."/>
            <person name="Kawasaki K."/>
            <person name="Sasaki T."/>
            <person name="Asakawa S."/>
            <person name="Kudoh J."/>
            <person name="Shintani A."/>
            <person name="Shibuya K."/>
            <person name="Yoshizaki Y."/>
            <person name="Aoki N."/>
            <person name="Mitsuyama S."/>
            <person name="Roe B.A."/>
            <person name="Chen F."/>
            <person name="Chu L."/>
            <person name="Crabtree J."/>
            <person name="Deschamps S."/>
            <person name="Do A."/>
            <person name="Do T."/>
            <person name="Dorman A."/>
            <person name="Fang F."/>
            <person name="Fu Y."/>
            <person name="Hu P."/>
            <person name="Hua A."/>
            <person name="Kenton S."/>
            <person name="Lai H."/>
            <person name="Lao H.I."/>
            <person name="Lewis J."/>
            <person name="Lewis S."/>
            <person name="Lin S.-P."/>
            <person name="Loh P."/>
            <person name="Malaj E."/>
            <person name="Nguyen T."/>
            <person name="Pan H."/>
            <person name="Phan S."/>
            <person name="Qi S."/>
            <person name="Qian Y."/>
            <person name="Ray L."/>
            <person name="Ren Q."/>
            <person name="Shaull S."/>
            <person name="Sloan D."/>
            <person name="Song L."/>
            <person name="Wang Q."/>
            <person name="Wang Y."/>
            <person name="Wang Z."/>
            <person name="White J."/>
            <person name="Willingham D."/>
            <person name="Wu H."/>
            <person name="Yao Z."/>
            <person name="Zhan M."/>
            <person name="Zhang G."/>
            <person name="Chissoe S."/>
            <person name="Murray J."/>
            <person name="Miller N."/>
            <person name="Minx P."/>
            <person name="Fulton R."/>
            <person name="Johnson D."/>
            <person name="Bemis G."/>
            <person name="Bentley D."/>
            <person name="Bradshaw H."/>
            <person name="Bourne S."/>
            <person name="Cordes M."/>
            <person name="Du Z."/>
            <person name="Fulton L."/>
            <person name="Goela D."/>
            <person name="Graves T."/>
            <person name="Hawkins J."/>
            <person name="Hinds K."/>
            <person name="Kemp K."/>
            <person name="Latreille P."/>
            <person name="Layman D."/>
            <person name="Ozersky P."/>
            <person name="Rohlfing T."/>
            <person name="Scheet P."/>
            <person name="Walker C."/>
            <person name="Wamsley A."/>
            <person name="Wohldmann P."/>
            <person name="Pepin K."/>
            <person name="Nelson J."/>
            <person name="Korf I."/>
            <person name="Bedell J.A."/>
            <person name="Hillier L.W."/>
            <person name="Mardis E."/>
            <person name="Waterston R."/>
            <person name="Wilson R."/>
            <person name="Emanuel B.S."/>
            <person name="Shaikh T."/>
            <person name="Kurahashi H."/>
            <person name="Saitta S."/>
            <person name="Budarf M.L."/>
            <person name="McDermid H.E."/>
            <person name="Johnson A."/>
            <person name="Wong A.C.C."/>
            <person name="Morrow B.E."/>
            <person name="Edelmann L."/>
            <person name="Kim U.J."/>
            <person name="Shizuya H."/>
            <person name="Simon M.I."/>
            <person name="Dumanski J.P."/>
            <person name="Peyrard M."/>
            <person name="Kedra D."/>
            <person name="Seroussi E."/>
            <person name="Fransson I."/>
            <person name="Tapia I."/>
            <person name="Bruder C.E."/>
            <person name="O'Brien K.P."/>
            <person name="Wilkinson P."/>
            <person name="Bodenteich A."/>
            <person name="Hartman K."/>
            <person name="Hu X."/>
            <person name="Khan A.S."/>
            <person name="Lane L."/>
            <person name="Tilahun Y."/>
            <person name="Wright H."/>
        </authorList>
    </citation>
    <scope>NUCLEOTIDE SEQUENCE [LARGE SCALE GENOMIC DNA] (IMGT ALLELE IGLV3-16*01)</scope>
</reference>
<reference key="2">
    <citation type="submission" date="2005-07" db="EMBL/GenBank/DDBJ databases">
        <authorList>
            <person name="Mural R.J."/>
            <person name="Istrail S."/>
            <person name="Sutton G.G."/>
            <person name="Florea L."/>
            <person name="Halpern A.L."/>
            <person name="Mobarry C.M."/>
            <person name="Lippert R."/>
            <person name="Walenz B."/>
            <person name="Shatkay H."/>
            <person name="Dew I."/>
            <person name="Miller J.R."/>
            <person name="Flanigan M.J."/>
            <person name="Edwards N.J."/>
            <person name="Bolanos R."/>
            <person name="Fasulo D."/>
            <person name="Halldorsson B.V."/>
            <person name="Hannenhalli S."/>
            <person name="Turner R."/>
            <person name="Yooseph S."/>
            <person name="Lu F."/>
            <person name="Nusskern D.R."/>
            <person name="Shue B.C."/>
            <person name="Zheng X.H."/>
            <person name="Zhong F."/>
            <person name="Delcher A.L."/>
            <person name="Huson D.H."/>
            <person name="Kravitz S.A."/>
            <person name="Mouchard L."/>
            <person name="Reinert K."/>
            <person name="Remington K.A."/>
            <person name="Clark A.G."/>
            <person name="Waterman M.S."/>
            <person name="Eichler E.E."/>
            <person name="Adams M.D."/>
            <person name="Hunkapiller M.W."/>
            <person name="Myers E.W."/>
            <person name="Venter J.C."/>
        </authorList>
    </citation>
    <scope>NUCLEOTIDE SEQUENCE [LARGE SCALE GENOMIC DNA]</scope>
</reference>
<reference key="3">
    <citation type="journal article" date="2001" name="Exp. Clin. Immunogenet.">
        <title>Nomenclature of the human immunoglobulin lambda (IGL) genes.</title>
        <authorList>
            <person name="Lefranc M.P."/>
        </authorList>
    </citation>
    <scope>NOMENCLATURE</scope>
</reference>
<reference key="4">
    <citation type="book" date="2001" name="The Immunoglobulin FactsBook.">
        <title>The Immunoglobulin FactsBook.</title>
        <editorList>
            <person name="Lefranc M.P."/>
            <person name="Lefranc G."/>
        </editorList>
        <authorList>
            <person name="Lefranc M.P."/>
            <person name="Lefranc G."/>
        </authorList>
    </citation>
    <scope>NOMENCLATURE</scope>
</reference>
<reference key="5">
    <citation type="journal article" date="2007" name="Annu. Rev. Genet.">
        <title>Immunoglobulin somatic hypermutation.</title>
        <authorList>
            <person name="Teng G."/>
            <person name="Papavasiliou F.N."/>
        </authorList>
    </citation>
    <scope>REVIEW ON SOMATIC HYPERMUTATION</scope>
</reference>
<reference key="6">
    <citation type="journal article" date="2010" name="J. Allergy Clin. Immunol.">
        <title>Structure and function of immunoglobulins.</title>
        <authorList>
            <person name="Schroeder H.W. Jr."/>
            <person name="Cavacini L."/>
        </authorList>
    </citation>
    <scope>REVIEW ON IMMUNOGLOBULINS</scope>
</reference>
<reference key="7">
    <citation type="journal article" date="2012" name="Nat. Rev. Immunol.">
        <title>Molecular programming of B cell memory.</title>
        <authorList>
            <person name="McHeyzer-Williams M."/>
            <person name="Okitsu S."/>
            <person name="Wang N."/>
            <person name="McHeyzer-Williams L."/>
        </authorList>
    </citation>
    <scope>REVIEW ON FUNCTION</scope>
</reference>
<reference key="8">
    <citation type="journal article" date="2014" name="Front. Immunol.">
        <title>Immunoglobulin and T Cell Receptor Genes: IMGT((R)) and the Birth and Rise of Immunoinformatics.</title>
        <authorList>
            <person name="Lefranc M.P."/>
        </authorList>
    </citation>
    <scope>NOMENCLATURE</scope>
</reference>
<organism>
    <name type="scientific">Homo sapiens</name>
    <name type="common">Human</name>
    <dbReference type="NCBI Taxonomy" id="9606"/>
    <lineage>
        <taxon>Eukaryota</taxon>
        <taxon>Metazoa</taxon>
        <taxon>Chordata</taxon>
        <taxon>Craniata</taxon>
        <taxon>Vertebrata</taxon>
        <taxon>Euteleostomi</taxon>
        <taxon>Mammalia</taxon>
        <taxon>Eutheria</taxon>
        <taxon>Euarchontoglires</taxon>
        <taxon>Primates</taxon>
        <taxon>Haplorrhini</taxon>
        <taxon>Catarrhini</taxon>
        <taxon>Hominidae</taxon>
        <taxon>Homo</taxon>
    </lineage>
</organism>
<evidence type="ECO:0000250" key="1">
    <source>
        <dbReference type="UniProtKB" id="P01721"/>
    </source>
</evidence>
<evidence type="ECO:0000255" key="2"/>
<evidence type="ECO:0000255" key="3">
    <source>
        <dbReference type="PROSITE-ProRule" id="PRU00114"/>
    </source>
</evidence>
<evidence type="ECO:0000303" key="4">
    <source>
    </source>
</evidence>
<evidence type="ECO:0000303" key="5">
    <source>
    </source>
</evidence>
<evidence type="ECO:0000303" key="6">
    <source>
    </source>
</evidence>
<evidence type="ECO:0000303" key="7">
    <source>
    </source>
</evidence>
<evidence type="ECO:0000303" key="8">
    <source>
    </source>
</evidence>
<evidence type="ECO:0000303" key="9">
    <source ref="4"/>
</evidence>
<evidence type="ECO:0000305" key="10"/>
<keyword id="KW-1064">Adaptive immunity</keyword>
<keyword id="KW-1003">Cell membrane</keyword>
<keyword id="KW-1015">Disulfide bond</keyword>
<keyword id="KW-0391">Immunity</keyword>
<keyword id="KW-1280">Immunoglobulin</keyword>
<keyword id="KW-0393">Immunoglobulin domain</keyword>
<keyword id="KW-0472">Membrane</keyword>
<keyword id="KW-1267">Proteomics identification</keyword>
<keyword id="KW-1185">Reference proteome</keyword>
<keyword id="KW-0964">Secreted</keyword>
<keyword id="KW-0732">Signal</keyword>